<organism>
    <name type="scientific">Saccharomyces cerevisiae (strain ATCC 204508 / S288c)</name>
    <name type="common">Baker's yeast</name>
    <dbReference type="NCBI Taxonomy" id="559292"/>
    <lineage>
        <taxon>Eukaryota</taxon>
        <taxon>Fungi</taxon>
        <taxon>Dikarya</taxon>
        <taxon>Ascomycota</taxon>
        <taxon>Saccharomycotina</taxon>
        <taxon>Saccharomycetes</taxon>
        <taxon>Saccharomycetales</taxon>
        <taxon>Saccharomycetaceae</taxon>
        <taxon>Saccharomyces</taxon>
    </lineage>
</organism>
<keyword id="KW-0134">Cell wall</keyword>
<keyword id="KW-0325">Glycoprotein</keyword>
<keyword id="KW-0336">GPI-anchor</keyword>
<keyword id="KW-0449">Lipoprotein</keyword>
<keyword id="KW-0472">Membrane</keyword>
<keyword id="KW-1185">Reference proteome</keyword>
<keyword id="KW-0964">Secreted</keyword>
<keyword id="KW-0732">Signal</keyword>
<accession>P40092</accession>
<accession>D3DM57</accession>
<reference key="1">
    <citation type="journal article" date="1997" name="Nature">
        <title>The nucleotide sequence of Saccharomyces cerevisiae chromosome V.</title>
        <authorList>
            <person name="Dietrich F.S."/>
            <person name="Mulligan J.T."/>
            <person name="Hennessy K.M."/>
            <person name="Yelton M.A."/>
            <person name="Allen E."/>
            <person name="Araujo R."/>
            <person name="Aviles E."/>
            <person name="Berno A."/>
            <person name="Brennan T."/>
            <person name="Carpenter J."/>
            <person name="Chen E."/>
            <person name="Cherry J.M."/>
            <person name="Chung E."/>
            <person name="Duncan M."/>
            <person name="Guzman E."/>
            <person name="Hartzell G."/>
            <person name="Hunicke-Smith S."/>
            <person name="Hyman R.W."/>
            <person name="Kayser A."/>
            <person name="Komp C."/>
            <person name="Lashkari D."/>
            <person name="Lew H."/>
            <person name="Lin D."/>
            <person name="Mosedale D."/>
            <person name="Nakahara K."/>
            <person name="Namath A."/>
            <person name="Norgren R."/>
            <person name="Oefner P."/>
            <person name="Oh C."/>
            <person name="Petel F.X."/>
            <person name="Roberts D."/>
            <person name="Sehl P."/>
            <person name="Schramm S."/>
            <person name="Shogren T."/>
            <person name="Smith V."/>
            <person name="Taylor P."/>
            <person name="Wei Y."/>
            <person name="Botstein D."/>
            <person name="Davis R.W."/>
        </authorList>
    </citation>
    <scope>NUCLEOTIDE SEQUENCE [LARGE SCALE GENOMIC DNA]</scope>
    <source>
        <strain>ATCC 204508 / S288c</strain>
    </source>
</reference>
<reference key="2">
    <citation type="journal article" date="2014" name="G3 (Bethesda)">
        <title>The reference genome sequence of Saccharomyces cerevisiae: Then and now.</title>
        <authorList>
            <person name="Engel S.R."/>
            <person name="Dietrich F.S."/>
            <person name="Fisk D.G."/>
            <person name="Binkley G."/>
            <person name="Balakrishnan R."/>
            <person name="Costanzo M.C."/>
            <person name="Dwight S.S."/>
            <person name="Hitz B.C."/>
            <person name="Karra K."/>
            <person name="Nash R.S."/>
            <person name="Weng S."/>
            <person name="Wong E.D."/>
            <person name="Lloyd P."/>
            <person name="Skrzypek M.S."/>
            <person name="Miyasato S.R."/>
            <person name="Simison M."/>
            <person name="Cherry J.M."/>
        </authorList>
    </citation>
    <scope>GENOME REANNOTATION</scope>
    <source>
        <strain>ATCC 204508 / S288c</strain>
    </source>
</reference>
<reference key="3">
    <citation type="journal article" date="2007" name="Genome Res.">
        <title>Approaching a complete repository of sequence-verified protein-encoding clones for Saccharomyces cerevisiae.</title>
        <authorList>
            <person name="Hu Y."/>
            <person name="Rolfs A."/>
            <person name="Bhullar B."/>
            <person name="Murthy T.V.S."/>
            <person name="Zhu C."/>
            <person name="Berger M.F."/>
            <person name="Camargo A.A."/>
            <person name="Kelley F."/>
            <person name="McCarron S."/>
            <person name="Jepson D."/>
            <person name="Richardson A."/>
            <person name="Raphael J."/>
            <person name="Moreira D."/>
            <person name="Taycher E."/>
            <person name="Zuo D."/>
            <person name="Mohr S."/>
            <person name="Kane M.F."/>
            <person name="Williamson J."/>
            <person name="Simpson A.J.G."/>
            <person name="Bulyk M.L."/>
            <person name="Harlow E."/>
            <person name="Marsischky G."/>
            <person name="Kolodner R.D."/>
            <person name="LaBaer J."/>
        </authorList>
    </citation>
    <scope>NUCLEOTIDE SEQUENCE [GENOMIC DNA]</scope>
    <source>
        <strain>ATCC 204508 / S288c</strain>
    </source>
</reference>
<reference key="4">
    <citation type="journal article" date="1998" name="Mol. Gen. Genet.">
        <title>Screening for glycosylphosphatidylinositol (GPI)-dependent cell wall proteins in Saccharomyces cerevisiae.</title>
        <authorList>
            <person name="Hamada K."/>
            <person name="Fukuchi S."/>
            <person name="Arisawa M."/>
            <person name="Baba M."/>
            <person name="Kitada K."/>
        </authorList>
    </citation>
    <scope>SUBCELLULAR LOCATION</scope>
</reference>
<reference key="5">
    <citation type="journal article" date="1999" name="J. Bacteriol.">
        <title>Amino acid residues in the omega-minus region participate in cellular localization of yeast glycosylphosphatidylinositol-attached proteins.</title>
        <authorList>
            <person name="Hamada K."/>
            <person name="Terashima H."/>
            <person name="Arisawa M."/>
            <person name="Yabuki N."/>
            <person name="Kitada K."/>
        </authorList>
    </citation>
    <scope>SUBCELLULAR LOCATION</scope>
</reference>
<reference key="6">
    <citation type="journal article" date="2000" name="Yeast">
        <title>Stress response and expression patterns in wine fermentations of yeast genes induced at the diauxic shift.</title>
        <authorList>
            <person name="Puig S."/>
            <person name="Perez-Ortin J.E."/>
        </authorList>
    </citation>
    <scope>INDUCTION</scope>
</reference>
<reference key="7">
    <citation type="journal article" date="2001" name="Mol. Microbiol.">
        <title>Low external pH induces HOG1-dependent changes in the organization of the Saccharomyces cerevisiae cell wall.</title>
        <authorList>
            <person name="Kapteyn J.C."/>
            <person name="ter Riet B."/>
            <person name="Vink E."/>
            <person name="Blad S."/>
            <person name="De Nobel H."/>
            <person name="Van Den Ende H."/>
            <person name="Klis F.M."/>
        </authorList>
    </citation>
    <scope>INDUCTION</scope>
</reference>
<reference key="8">
    <citation type="journal article" date="2006" name="Appl. Environ. Microbiol.">
        <title>The SPI1 gene, encoding a glycosylphosphatidylinositol-anchored cell wall protein, plays a prominent role in the development of yeast resistance to lipophilic weak-acid food preservatives.</title>
        <authorList>
            <person name="Simoes T."/>
            <person name="Mira N.P."/>
            <person name="Fernandes A.R."/>
            <person name="Sa-Correia I."/>
        </authorList>
    </citation>
    <scope>FUNCTION</scope>
    <scope>INDUCTION</scope>
</reference>
<protein>
    <recommendedName>
        <fullName>Uncharacterized cell wall protein SPI1</fullName>
    </recommendedName>
    <alternativeName>
        <fullName>Stationary phase-induced protein 1</fullName>
    </alternativeName>
</protein>
<feature type="signal peptide" evidence="1">
    <location>
        <begin position="1"/>
        <end position="19"/>
    </location>
</feature>
<feature type="chain" id="PRO_0000014317" description="Uncharacterized cell wall protein SPI1">
    <location>
        <begin position="20"/>
        <end position="127"/>
    </location>
</feature>
<feature type="propeptide" id="PRO_0000372448" description="Removed in mature form" evidence="1">
    <location>
        <begin position="128"/>
        <end position="148"/>
    </location>
</feature>
<feature type="lipid moiety-binding region" description="GPI-anchor amidated asparagine" evidence="1">
    <location>
        <position position="127"/>
    </location>
</feature>
<feature type="glycosylation site" description="N-linked (GlcNAc...) asparagine" evidence="1">
    <location>
        <position position="41"/>
    </location>
</feature>
<feature type="glycosylation site" description="N-linked (GlcNAc...) asparagine" evidence="1">
    <location>
        <position position="59"/>
    </location>
</feature>
<dbReference type="EMBL" id="U18917">
    <property type="protein sequence ID" value="AAB64677.1"/>
    <property type="molecule type" value="Genomic_DNA"/>
</dbReference>
<dbReference type="EMBL" id="AY557784">
    <property type="protein sequence ID" value="AAS56110.1"/>
    <property type="molecule type" value="Genomic_DNA"/>
</dbReference>
<dbReference type="EMBL" id="BK006939">
    <property type="protein sequence ID" value="DAA07811.1"/>
    <property type="molecule type" value="Genomic_DNA"/>
</dbReference>
<dbReference type="PIR" id="S50653">
    <property type="entry name" value="S50653"/>
</dbReference>
<dbReference type="RefSeq" id="NP_011077.1">
    <property type="nucleotide sequence ID" value="NM_001179040.1"/>
</dbReference>
<dbReference type="BioGRID" id="36899">
    <property type="interactions" value="38"/>
</dbReference>
<dbReference type="DIP" id="DIP-2064N"/>
<dbReference type="FunCoup" id="P40092">
    <property type="interactions" value="101"/>
</dbReference>
<dbReference type="IntAct" id="P40092">
    <property type="interactions" value="7"/>
</dbReference>
<dbReference type="STRING" id="4932.YER150W"/>
<dbReference type="GlyCosmos" id="P40092">
    <property type="glycosylation" value="2 sites, No reported glycans"/>
</dbReference>
<dbReference type="GlyGen" id="P40092">
    <property type="glycosylation" value="3 sites"/>
</dbReference>
<dbReference type="PaxDb" id="4932-YER150W"/>
<dbReference type="PeptideAtlas" id="P40092"/>
<dbReference type="EnsemblFungi" id="YER150W_mRNA">
    <property type="protein sequence ID" value="YER150W"/>
    <property type="gene ID" value="YER150W"/>
</dbReference>
<dbReference type="GeneID" id="856893"/>
<dbReference type="KEGG" id="sce:YER150W"/>
<dbReference type="AGR" id="SGD:S000000952"/>
<dbReference type="SGD" id="S000000952">
    <property type="gene designation" value="SPI1"/>
</dbReference>
<dbReference type="VEuPathDB" id="FungiDB:YER150W"/>
<dbReference type="eggNOG" id="ENOG502S7XK">
    <property type="taxonomic scope" value="Eukaryota"/>
</dbReference>
<dbReference type="HOGENOM" id="CLU_1760251_0_0_1"/>
<dbReference type="InParanoid" id="P40092"/>
<dbReference type="OMA" id="XANARAI"/>
<dbReference type="OrthoDB" id="4094614at2759"/>
<dbReference type="BioCyc" id="YEAST:G3O-30311-MONOMER"/>
<dbReference type="BioGRID-ORCS" id="856893">
    <property type="hits" value="5 hits in 10 CRISPR screens"/>
</dbReference>
<dbReference type="PRO" id="PR:P40092"/>
<dbReference type="Proteomes" id="UP000002311">
    <property type="component" value="Chromosome V"/>
</dbReference>
<dbReference type="RNAct" id="P40092">
    <property type="molecule type" value="protein"/>
</dbReference>
<dbReference type="GO" id="GO:0071944">
    <property type="term" value="C:cell periphery"/>
    <property type="evidence" value="ECO:0007005"/>
    <property type="project" value="SGD"/>
</dbReference>
<dbReference type="GO" id="GO:0005576">
    <property type="term" value="C:extracellular region"/>
    <property type="evidence" value="ECO:0007669"/>
    <property type="project" value="UniProtKB-KW"/>
</dbReference>
<dbReference type="GO" id="GO:0009277">
    <property type="term" value="C:fungal-type cell wall"/>
    <property type="evidence" value="ECO:0000314"/>
    <property type="project" value="SGD"/>
</dbReference>
<dbReference type="GO" id="GO:0098552">
    <property type="term" value="C:side of membrane"/>
    <property type="evidence" value="ECO:0007669"/>
    <property type="project" value="UniProtKB-KW"/>
</dbReference>
<dbReference type="GO" id="GO:0005199">
    <property type="term" value="F:structural constituent of cell wall"/>
    <property type="evidence" value="ECO:0000318"/>
    <property type="project" value="GO_Central"/>
</dbReference>
<dbReference type="GO" id="GO:0031505">
    <property type="term" value="P:fungal-type cell wall organization"/>
    <property type="evidence" value="ECO:0000318"/>
    <property type="project" value="GO_Central"/>
</dbReference>
<dbReference type="GO" id="GO:0010447">
    <property type="term" value="P:response to acidic pH"/>
    <property type="evidence" value="ECO:0000315"/>
    <property type="project" value="SGD"/>
</dbReference>
<dbReference type="InterPro" id="IPR038843">
    <property type="entry name" value="Sed1/Spi1"/>
</dbReference>
<dbReference type="PANTHER" id="PTHR35523">
    <property type="entry name" value="CELL WALL PROTEIN SED1"/>
    <property type="match status" value="1"/>
</dbReference>
<dbReference type="PANTHER" id="PTHR35523:SF1">
    <property type="entry name" value="CELL WALL PROTEIN SED1"/>
    <property type="match status" value="1"/>
</dbReference>
<evidence type="ECO:0000255" key="1"/>
<evidence type="ECO:0000269" key="2">
    <source>
    </source>
</evidence>
<evidence type="ECO:0000269" key="3">
    <source>
    </source>
</evidence>
<evidence type="ECO:0000269" key="4">
    <source>
    </source>
</evidence>
<evidence type="ECO:0000305" key="5"/>
<proteinExistence type="evidence at transcript level"/>
<gene>
    <name type="primary">SPI1</name>
    <name type="ordered locus">YER150W</name>
</gene>
<name>SPI1_YEAST</name>
<comment type="function">
    <text evidence="4">Cell wall protein that plays a role in adaptation and resistance to cell wall stress.</text>
</comment>
<comment type="subcellular location">
    <subcellularLocation>
        <location>Secreted</location>
        <location>Cell wall</location>
    </subcellularLocation>
    <subcellularLocation>
        <location>Membrane</location>
        <topology>Lipid-anchor</topology>
        <topology>GPI-anchor</topology>
    </subcellularLocation>
    <text>Covalently-linked GPI-modified cell wall protein (GPI-CWP).</text>
</comment>
<comment type="induction">
    <text evidence="2 3 4">Induced by transcription factors MSN2 and MSN4 in stationary phase and by transcription factors MSN2, MSN4 and HAA1 upon weak-acid stress. Up-regulated by low pH.</text>
</comment>
<comment type="PTM">
    <text>The GPI-anchor is attached to the protein in the endoplasmic reticulum and serves to target the protein to the cell surface. There, the glucosamine-inositol phospholipid moiety is cleaved off and the GPI-modified mannoprotein is covalently attached via its lipidless GPI glycan remnant to the 1,6-beta-glucan of the outer cell wall layer.</text>
</comment>
<comment type="similarity">
    <text evidence="5">Belongs to the SED1 family.</text>
</comment>
<sequence>MLSNAKLLLSLAMASTALGLVSNSSSSVIVVPSSDATIAGNDTATPAPEPSSAAPIFYNSTATATQYEVVSEFTTYCPEPTTFVTNGATFTVTAPTTLTITNCPCTIEKPTSETSVSSTHDVETNSNAANARAIPGALGLAGAVMMLL</sequence>